<protein>
    <recommendedName>
        <fullName evidence="1">Holo-[acyl-carrier-protein] synthase</fullName>
        <shortName evidence="1">Holo-ACP synthase</shortName>
        <ecNumber evidence="1">2.7.8.7</ecNumber>
    </recommendedName>
    <alternativeName>
        <fullName evidence="1">4'-phosphopantetheinyl transferase AcpS</fullName>
    </alternativeName>
</protein>
<sequence length="130" mass="14196">MGIVGVGIDLVSIPEFAEQVDQPGTVFSETFTPGERRDASDKSSSAARHLAARWAAKEAVIKAWSGSRFAQRPVLREDIHRDIEVVTDMWGRPRVRLSGDIAKHLADVTIHVSLTHEKDTAAAVAILETP</sequence>
<dbReference type="EC" id="2.7.8.7" evidence="1"/>
<dbReference type="EMBL" id="AE016958">
    <property type="protein sequence ID" value="AAS04648.1"/>
    <property type="molecule type" value="Genomic_DNA"/>
</dbReference>
<dbReference type="RefSeq" id="WP_003873105.1">
    <property type="nucleotide sequence ID" value="NZ_CP106873.1"/>
</dbReference>
<dbReference type="SMR" id="Q73XH8"/>
<dbReference type="STRING" id="262316.MAP_2331c"/>
<dbReference type="KEGG" id="mpa:MAP_2331c"/>
<dbReference type="eggNOG" id="COG0736">
    <property type="taxonomic scope" value="Bacteria"/>
</dbReference>
<dbReference type="HOGENOM" id="CLU_089696_2_0_11"/>
<dbReference type="Proteomes" id="UP000000580">
    <property type="component" value="Chromosome"/>
</dbReference>
<dbReference type="GO" id="GO:0005737">
    <property type="term" value="C:cytoplasm"/>
    <property type="evidence" value="ECO:0007669"/>
    <property type="project" value="UniProtKB-SubCell"/>
</dbReference>
<dbReference type="GO" id="GO:0008897">
    <property type="term" value="F:holo-[acyl-carrier-protein] synthase activity"/>
    <property type="evidence" value="ECO:0007669"/>
    <property type="project" value="UniProtKB-UniRule"/>
</dbReference>
<dbReference type="GO" id="GO:0000287">
    <property type="term" value="F:magnesium ion binding"/>
    <property type="evidence" value="ECO:0007669"/>
    <property type="project" value="UniProtKB-UniRule"/>
</dbReference>
<dbReference type="GO" id="GO:0006633">
    <property type="term" value="P:fatty acid biosynthetic process"/>
    <property type="evidence" value="ECO:0007669"/>
    <property type="project" value="UniProtKB-UniRule"/>
</dbReference>
<dbReference type="Gene3D" id="3.90.470.20">
    <property type="entry name" value="4'-phosphopantetheinyl transferase domain"/>
    <property type="match status" value="1"/>
</dbReference>
<dbReference type="HAMAP" id="MF_00101">
    <property type="entry name" value="AcpS"/>
    <property type="match status" value="1"/>
</dbReference>
<dbReference type="InterPro" id="IPR008278">
    <property type="entry name" value="4-PPantetheinyl_Trfase_dom"/>
</dbReference>
<dbReference type="InterPro" id="IPR037143">
    <property type="entry name" value="4-PPantetheinyl_Trfase_dom_sf"/>
</dbReference>
<dbReference type="InterPro" id="IPR002582">
    <property type="entry name" value="ACPS"/>
</dbReference>
<dbReference type="InterPro" id="IPR004568">
    <property type="entry name" value="Ppantetheine-prot_Trfase_dom"/>
</dbReference>
<dbReference type="NCBIfam" id="TIGR00516">
    <property type="entry name" value="acpS"/>
    <property type="match status" value="1"/>
</dbReference>
<dbReference type="NCBIfam" id="TIGR00556">
    <property type="entry name" value="pantethn_trn"/>
    <property type="match status" value="1"/>
</dbReference>
<dbReference type="NCBIfam" id="NF000831">
    <property type="entry name" value="PRK00070.3-1"/>
    <property type="match status" value="1"/>
</dbReference>
<dbReference type="Pfam" id="PF01648">
    <property type="entry name" value="ACPS"/>
    <property type="match status" value="1"/>
</dbReference>
<dbReference type="SUPFAM" id="SSF56214">
    <property type="entry name" value="4'-phosphopantetheinyl transferase"/>
    <property type="match status" value="1"/>
</dbReference>
<comment type="function">
    <text evidence="1">Transfers the 4'-phosphopantetheine moiety from coenzyme A to a Ser of acyl-carrier-protein.</text>
</comment>
<comment type="catalytic activity">
    <reaction evidence="1">
        <text>apo-[ACP] + CoA = holo-[ACP] + adenosine 3',5'-bisphosphate + H(+)</text>
        <dbReference type="Rhea" id="RHEA:12068"/>
        <dbReference type="Rhea" id="RHEA-COMP:9685"/>
        <dbReference type="Rhea" id="RHEA-COMP:9690"/>
        <dbReference type="ChEBI" id="CHEBI:15378"/>
        <dbReference type="ChEBI" id="CHEBI:29999"/>
        <dbReference type="ChEBI" id="CHEBI:57287"/>
        <dbReference type="ChEBI" id="CHEBI:58343"/>
        <dbReference type="ChEBI" id="CHEBI:64479"/>
        <dbReference type="EC" id="2.7.8.7"/>
    </reaction>
</comment>
<comment type="cofactor">
    <cofactor evidence="1">
        <name>Mg(2+)</name>
        <dbReference type="ChEBI" id="CHEBI:18420"/>
    </cofactor>
</comment>
<comment type="subcellular location">
    <subcellularLocation>
        <location evidence="1">Cytoplasm</location>
    </subcellularLocation>
</comment>
<comment type="similarity">
    <text evidence="1">Belongs to the P-Pant transferase superfamily. AcpS family.</text>
</comment>
<feature type="chain" id="PRO_0000175672" description="Holo-[acyl-carrier-protein] synthase">
    <location>
        <begin position="1"/>
        <end position="130"/>
    </location>
</feature>
<feature type="binding site" evidence="1">
    <location>
        <position position="9"/>
    </location>
    <ligand>
        <name>Mg(2+)</name>
        <dbReference type="ChEBI" id="CHEBI:18420"/>
    </ligand>
</feature>
<feature type="binding site" evidence="1">
    <location>
        <position position="58"/>
    </location>
    <ligand>
        <name>Mg(2+)</name>
        <dbReference type="ChEBI" id="CHEBI:18420"/>
    </ligand>
</feature>
<keyword id="KW-0963">Cytoplasm</keyword>
<keyword id="KW-0275">Fatty acid biosynthesis</keyword>
<keyword id="KW-0276">Fatty acid metabolism</keyword>
<keyword id="KW-0444">Lipid biosynthesis</keyword>
<keyword id="KW-0443">Lipid metabolism</keyword>
<keyword id="KW-0460">Magnesium</keyword>
<keyword id="KW-0479">Metal-binding</keyword>
<keyword id="KW-1185">Reference proteome</keyword>
<keyword id="KW-0808">Transferase</keyword>
<proteinExistence type="inferred from homology"/>
<name>ACPS_MYCPA</name>
<evidence type="ECO:0000255" key="1">
    <source>
        <dbReference type="HAMAP-Rule" id="MF_00101"/>
    </source>
</evidence>
<organism>
    <name type="scientific">Mycolicibacterium paratuberculosis (strain ATCC BAA-968 / K-10)</name>
    <name type="common">Mycobacterium paratuberculosis</name>
    <dbReference type="NCBI Taxonomy" id="262316"/>
    <lineage>
        <taxon>Bacteria</taxon>
        <taxon>Bacillati</taxon>
        <taxon>Actinomycetota</taxon>
        <taxon>Actinomycetes</taxon>
        <taxon>Mycobacteriales</taxon>
        <taxon>Mycobacteriaceae</taxon>
        <taxon>Mycobacterium</taxon>
        <taxon>Mycobacterium avium complex (MAC)</taxon>
    </lineage>
</organism>
<accession>Q73XH8</accession>
<gene>
    <name evidence="1" type="primary">acpS</name>
    <name type="ordered locus">MAP_2331c</name>
</gene>
<reference key="1">
    <citation type="journal article" date="2005" name="Proc. Natl. Acad. Sci. U.S.A.">
        <title>The complete genome sequence of Mycobacterium avium subspecies paratuberculosis.</title>
        <authorList>
            <person name="Li L."/>
            <person name="Bannantine J.P."/>
            <person name="Zhang Q."/>
            <person name="Amonsin A."/>
            <person name="May B.J."/>
            <person name="Alt D."/>
            <person name="Banerji N."/>
            <person name="Kanjilal S."/>
            <person name="Kapur V."/>
        </authorList>
    </citation>
    <scope>NUCLEOTIDE SEQUENCE [LARGE SCALE GENOMIC DNA]</scope>
    <source>
        <strain>ATCC BAA-968 / K-10</strain>
    </source>
</reference>